<comment type="function">
    <text evidence="1">May play a role in DNA repair. It seems to be involved in an RecBC-independent recombinational process of DNA repair. It may act with RecF and RecO.</text>
</comment>
<comment type="similarity">
    <text evidence="1">Belongs to the RecR family.</text>
</comment>
<protein>
    <recommendedName>
        <fullName evidence="1">Recombination protein RecR</fullName>
    </recommendedName>
</protein>
<dbReference type="EMBL" id="CP000435">
    <property type="protein sequence ID" value="ABI47511.1"/>
    <property type="molecule type" value="Genomic_DNA"/>
</dbReference>
<dbReference type="SMR" id="Q0IBC2"/>
<dbReference type="STRING" id="64471.sync_1038"/>
<dbReference type="KEGG" id="syg:sync_1038"/>
<dbReference type="eggNOG" id="COG0353">
    <property type="taxonomic scope" value="Bacteria"/>
</dbReference>
<dbReference type="HOGENOM" id="CLU_060739_1_0_3"/>
<dbReference type="Proteomes" id="UP000001961">
    <property type="component" value="Chromosome"/>
</dbReference>
<dbReference type="GO" id="GO:0003677">
    <property type="term" value="F:DNA binding"/>
    <property type="evidence" value="ECO:0007669"/>
    <property type="project" value="UniProtKB-UniRule"/>
</dbReference>
<dbReference type="GO" id="GO:0008270">
    <property type="term" value="F:zinc ion binding"/>
    <property type="evidence" value="ECO:0007669"/>
    <property type="project" value="UniProtKB-KW"/>
</dbReference>
<dbReference type="GO" id="GO:0006310">
    <property type="term" value="P:DNA recombination"/>
    <property type="evidence" value="ECO:0007669"/>
    <property type="project" value="UniProtKB-UniRule"/>
</dbReference>
<dbReference type="GO" id="GO:0006281">
    <property type="term" value="P:DNA repair"/>
    <property type="evidence" value="ECO:0007669"/>
    <property type="project" value="UniProtKB-UniRule"/>
</dbReference>
<dbReference type="CDD" id="cd01025">
    <property type="entry name" value="TOPRIM_recR"/>
    <property type="match status" value="1"/>
</dbReference>
<dbReference type="Gene3D" id="3.40.1360.10">
    <property type="match status" value="1"/>
</dbReference>
<dbReference type="Gene3D" id="6.10.250.240">
    <property type="match status" value="1"/>
</dbReference>
<dbReference type="Gene3D" id="1.10.8.420">
    <property type="entry name" value="RecR Domain 1"/>
    <property type="match status" value="1"/>
</dbReference>
<dbReference type="HAMAP" id="MF_00017">
    <property type="entry name" value="RecR"/>
    <property type="match status" value="1"/>
</dbReference>
<dbReference type="InterPro" id="IPR000093">
    <property type="entry name" value="DNA_Rcmb_RecR"/>
</dbReference>
<dbReference type="InterPro" id="IPR023627">
    <property type="entry name" value="Rcmb_RecR"/>
</dbReference>
<dbReference type="InterPro" id="IPR015967">
    <property type="entry name" value="Rcmb_RecR_Znf"/>
</dbReference>
<dbReference type="InterPro" id="IPR006171">
    <property type="entry name" value="TOPRIM_dom"/>
</dbReference>
<dbReference type="InterPro" id="IPR034137">
    <property type="entry name" value="TOPRIM_RecR"/>
</dbReference>
<dbReference type="NCBIfam" id="TIGR00615">
    <property type="entry name" value="recR"/>
    <property type="match status" value="1"/>
</dbReference>
<dbReference type="PANTHER" id="PTHR30446">
    <property type="entry name" value="RECOMBINATION PROTEIN RECR"/>
    <property type="match status" value="1"/>
</dbReference>
<dbReference type="PANTHER" id="PTHR30446:SF0">
    <property type="entry name" value="RECOMBINATION PROTEIN RECR"/>
    <property type="match status" value="1"/>
</dbReference>
<dbReference type="Pfam" id="PF21175">
    <property type="entry name" value="RecR_C"/>
    <property type="match status" value="1"/>
</dbReference>
<dbReference type="Pfam" id="PF21176">
    <property type="entry name" value="RecR_HhH"/>
    <property type="match status" value="1"/>
</dbReference>
<dbReference type="Pfam" id="PF02132">
    <property type="entry name" value="RecR_ZnF"/>
    <property type="match status" value="1"/>
</dbReference>
<dbReference type="Pfam" id="PF13662">
    <property type="entry name" value="Toprim_4"/>
    <property type="match status" value="1"/>
</dbReference>
<dbReference type="SMART" id="SM00493">
    <property type="entry name" value="TOPRIM"/>
    <property type="match status" value="1"/>
</dbReference>
<dbReference type="SUPFAM" id="SSF111304">
    <property type="entry name" value="Recombination protein RecR"/>
    <property type="match status" value="1"/>
</dbReference>
<dbReference type="PROSITE" id="PS01300">
    <property type="entry name" value="RECR"/>
    <property type="match status" value="1"/>
</dbReference>
<dbReference type="PROSITE" id="PS50880">
    <property type="entry name" value="TOPRIM"/>
    <property type="match status" value="1"/>
</dbReference>
<organism>
    <name type="scientific">Synechococcus sp. (strain CC9311)</name>
    <dbReference type="NCBI Taxonomy" id="64471"/>
    <lineage>
        <taxon>Bacteria</taxon>
        <taxon>Bacillati</taxon>
        <taxon>Cyanobacteriota</taxon>
        <taxon>Cyanophyceae</taxon>
        <taxon>Synechococcales</taxon>
        <taxon>Synechococcaceae</taxon>
        <taxon>Synechococcus</taxon>
    </lineage>
</organism>
<reference key="1">
    <citation type="journal article" date="2006" name="Proc. Natl. Acad. Sci. U.S.A.">
        <title>Genome sequence of Synechococcus CC9311: insights into adaptation to a coastal environment.</title>
        <authorList>
            <person name="Palenik B."/>
            <person name="Ren Q."/>
            <person name="Dupont C.L."/>
            <person name="Myers G.S."/>
            <person name="Heidelberg J.F."/>
            <person name="Badger J.H."/>
            <person name="Madupu R."/>
            <person name="Nelson W.C."/>
            <person name="Brinkac L.M."/>
            <person name="Dodson R.J."/>
            <person name="Durkin A.S."/>
            <person name="Daugherty S.C."/>
            <person name="Sullivan S.A."/>
            <person name="Khouri H."/>
            <person name="Mohamoud Y."/>
            <person name="Halpin R."/>
            <person name="Paulsen I.T."/>
        </authorList>
    </citation>
    <scope>NUCLEOTIDE SEQUENCE [LARGE SCALE GENOMIC DNA]</scope>
    <source>
        <strain>CC9311</strain>
    </source>
</reference>
<sequence>MIDQFERLPGIGPRTAQRLALHLLRQPEEQIHSFADALLAARSQVGQCQTCFHLSAEPTCEICRNPERSIGMLCVVADSRDLLALERTREYAGRYHVLGGLISPMDGIGPEMLQISNLVKRVAADEINEVILALTPSVEGDTTSLYLARLLKPFTEVSRIAYGLPVGSELEYADDVTLSRALEGRRAVE</sequence>
<name>RECR_SYNS3</name>
<proteinExistence type="inferred from homology"/>
<gene>
    <name evidence="1" type="primary">recR</name>
    <name type="ordered locus">sync_1038</name>
</gene>
<feature type="chain" id="PRO_0000322957" description="Recombination protein RecR">
    <location>
        <begin position="1"/>
        <end position="189"/>
    </location>
</feature>
<feature type="domain" description="Toprim" evidence="1">
    <location>
        <begin position="71"/>
        <end position="165"/>
    </location>
</feature>
<feature type="zinc finger region" description="C4-type" evidence="1">
    <location>
        <begin position="48"/>
        <end position="63"/>
    </location>
</feature>
<evidence type="ECO:0000255" key="1">
    <source>
        <dbReference type="HAMAP-Rule" id="MF_00017"/>
    </source>
</evidence>
<accession>Q0IBC2</accession>
<keyword id="KW-0227">DNA damage</keyword>
<keyword id="KW-0233">DNA recombination</keyword>
<keyword id="KW-0234">DNA repair</keyword>
<keyword id="KW-0479">Metal-binding</keyword>
<keyword id="KW-1185">Reference proteome</keyword>
<keyword id="KW-0862">Zinc</keyword>
<keyword id="KW-0863">Zinc-finger</keyword>